<keyword id="KW-0067">ATP-binding</keyword>
<keyword id="KW-0963">Cytoplasm</keyword>
<keyword id="KW-0547">Nucleotide-binding</keyword>
<keyword id="KW-0548">Nucleotidyltransferase</keyword>
<keyword id="KW-1185">Reference proteome</keyword>
<keyword id="KW-0808">Transferase</keyword>
<keyword id="KW-0819">tRNA processing</keyword>
<feature type="chain" id="PRO_0000352985" description="Threonylcarbamoyl-AMP synthase">
    <location>
        <begin position="1"/>
        <end position="185"/>
    </location>
</feature>
<feature type="domain" description="YrdC-like" evidence="1">
    <location>
        <begin position="3"/>
        <end position="185"/>
    </location>
</feature>
<accession>A8FP81</accession>
<proteinExistence type="inferred from homology"/>
<gene>
    <name evidence="1" type="primary">tsaC</name>
    <name type="synonym">rimN</name>
    <name type="ordered locus">Ssed_0041</name>
</gene>
<organism>
    <name type="scientific">Shewanella sediminis (strain HAW-EB3)</name>
    <dbReference type="NCBI Taxonomy" id="425104"/>
    <lineage>
        <taxon>Bacteria</taxon>
        <taxon>Pseudomonadati</taxon>
        <taxon>Pseudomonadota</taxon>
        <taxon>Gammaproteobacteria</taxon>
        <taxon>Alteromonadales</taxon>
        <taxon>Shewanellaceae</taxon>
        <taxon>Shewanella</taxon>
    </lineage>
</organism>
<protein>
    <recommendedName>
        <fullName evidence="1">Threonylcarbamoyl-AMP synthase</fullName>
        <shortName evidence="1">TC-AMP synthase</shortName>
        <ecNumber evidence="1">2.7.7.87</ecNumber>
    </recommendedName>
    <alternativeName>
        <fullName evidence="1">L-threonylcarbamoyladenylate synthase</fullName>
    </alternativeName>
    <alternativeName>
        <fullName evidence="1">t(6)A37 threonylcarbamoyladenosine biosynthesis protein TsaC</fullName>
    </alternativeName>
    <alternativeName>
        <fullName evidence="1">tRNA threonylcarbamoyladenosine biosynthesis protein TsaC</fullName>
    </alternativeName>
</protein>
<evidence type="ECO:0000255" key="1">
    <source>
        <dbReference type="HAMAP-Rule" id="MF_01852"/>
    </source>
</evidence>
<name>TSAC_SHESH</name>
<comment type="function">
    <text evidence="1">Required for the formation of a threonylcarbamoyl group on adenosine at position 37 (t(6)A37) in tRNAs that read codons beginning with adenine. Catalyzes the conversion of L-threonine, HCO(3)(-)/CO(2) and ATP to give threonylcarbamoyl-AMP (TC-AMP) as the acyladenylate intermediate, with the release of diphosphate.</text>
</comment>
<comment type="catalytic activity">
    <reaction evidence="1">
        <text>L-threonine + hydrogencarbonate + ATP = L-threonylcarbamoyladenylate + diphosphate + H2O</text>
        <dbReference type="Rhea" id="RHEA:36407"/>
        <dbReference type="ChEBI" id="CHEBI:15377"/>
        <dbReference type="ChEBI" id="CHEBI:17544"/>
        <dbReference type="ChEBI" id="CHEBI:30616"/>
        <dbReference type="ChEBI" id="CHEBI:33019"/>
        <dbReference type="ChEBI" id="CHEBI:57926"/>
        <dbReference type="ChEBI" id="CHEBI:73682"/>
        <dbReference type="EC" id="2.7.7.87"/>
    </reaction>
</comment>
<comment type="subcellular location">
    <subcellularLocation>
        <location evidence="1">Cytoplasm</location>
    </subcellularLocation>
</comment>
<comment type="similarity">
    <text evidence="1">Belongs to the SUA5 family. TsaC subfamily.</text>
</comment>
<dbReference type="EC" id="2.7.7.87" evidence="1"/>
<dbReference type="EMBL" id="CP000821">
    <property type="protein sequence ID" value="ABV34654.1"/>
    <property type="molecule type" value="Genomic_DNA"/>
</dbReference>
<dbReference type="RefSeq" id="WP_012004180.1">
    <property type="nucleotide sequence ID" value="NC_009831.1"/>
</dbReference>
<dbReference type="SMR" id="A8FP81"/>
<dbReference type="STRING" id="425104.Ssed_0041"/>
<dbReference type="KEGG" id="sse:Ssed_0041"/>
<dbReference type="eggNOG" id="COG0009">
    <property type="taxonomic scope" value="Bacteria"/>
</dbReference>
<dbReference type="HOGENOM" id="CLU_031397_6_0_6"/>
<dbReference type="OrthoDB" id="9814580at2"/>
<dbReference type="Proteomes" id="UP000002015">
    <property type="component" value="Chromosome"/>
</dbReference>
<dbReference type="GO" id="GO:0005737">
    <property type="term" value="C:cytoplasm"/>
    <property type="evidence" value="ECO:0007669"/>
    <property type="project" value="UniProtKB-SubCell"/>
</dbReference>
<dbReference type="GO" id="GO:0005524">
    <property type="term" value="F:ATP binding"/>
    <property type="evidence" value="ECO:0007669"/>
    <property type="project" value="UniProtKB-UniRule"/>
</dbReference>
<dbReference type="GO" id="GO:0003725">
    <property type="term" value="F:double-stranded RNA binding"/>
    <property type="evidence" value="ECO:0007669"/>
    <property type="project" value="InterPro"/>
</dbReference>
<dbReference type="GO" id="GO:0061710">
    <property type="term" value="F:L-threonylcarbamoyladenylate synthase"/>
    <property type="evidence" value="ECO:0007669"/>
    <property type="project" value="UniProtKB-EC"/>
</dbReference>
<dbReference type="GO" id="GO:0000049">
    <property type="term" value="F:tRNA binding"/>
    <property type="evidence" value="ECO:0007669"/>
    <property type="project" value="TreeGrafter"/>
</dbReference>
<dbReference type="GO" id="GO:0006450">
    <property type="term" value="P:regulation of translational fidelity"/>
    <property type="evidence" value="ECO:0007669"/>
    <property type="project" value="TreeGrafter"/>
</dbReference>
<dbReference type="GO" id="GO:0002949">
    <property type="term" value="P:tRNA threonylcarbamoyladenosine modification"/>
    <property type="evidence" value="ECO:0007669"/>
    <property type="project" value="UniProtKB-UniRule"/>
</dbReference>
<dbReference type="FunFam" id="3.90.870.10:FF:000004">
    <property type="entry name" value="Threonylcarbamoyl-AMP synthase"/>
    <property type="match status" value="1"/>
</dbReference>
<dbReference type="Gene3D" id="3.90.870.10">
    <property type="entry name" value="DHBP synthase"/>
    <property type="match status" value="1"/>
</dbReference>
<dbReference type="HAMAP" id="MF_01852">
    <property type="entry name" value="TsaC"/>
    <property type="match status" value="1"/>
</dbReference>
<dbReference type="InterPro" id="IPR017945">
    <property type="entry name" value="DHBP_synth_RibB-like_a/b_dom"/>
</dbReference>
<dbReference type="InterPro" id="IPR006070">
    <property type="entry name" value="Sua5-like_dom"/>
</dbReference>
<dbReference type="InterPro" id="IPR023535">
    <property type="entry name" value="TC-AMP_synthase"/>
</dbReference>
<dbReference type="InterPro" id="IPR050156">
    <property type="entry name" value="TC-AMP_synthase_SUA5"/>
</dbReference>
<dbReference type="NCBIfam" id="TIGR00057">
    <property type="entry name" value="L-threonylcarbamoyladenylate synthase"/>
    <property type="match status" value="1"/>
</dbReference>
<dbReference type="PANTHER" id="PTHR17490">
    <property type="entry name" value="SUA5"/>
    <property type="match status" value="1"/>
</dbReference>
<dbReference type="PANTHER" id="PTHR17490:SF18">
    <property type="entry name" value="THREONYLCARBAMOYL-AMP SYNTHASE"/>
    <property type="match status" value="1"/>
</dbReference>
<dbReference type="Pfam" id="PF01300">
    <property type="entry name" value="Sua5_yciO_yrdC"/>
    <property type="match status" value="1"/>
</dbReference>
<dbReference type="SUPFAM" id="SSF55821">
    <property type="entry name" value="YrdC/RibB"/>
    <property type="match status" value="1"/>
</dbReference>
<dbReference type="PROSITE" id="PS51163">
    <property type="entry name" value="YRDC"/>
    <property type="match status" value="1"/>
</dbReference>
<sequence length="185" mass="20088">MLEQAPDEVQEIIEQGGVVAYPTEAVYGLGCDPDNDEAITRLLALKKRPWQKGLILVASDYQQLLPYIDESRLTNEQLNKVFVKWPGPFTFIMPIKPGLSNLLCGSFNSLAVRVSSHPTIQAICQRLGKPLVSTSANHAGEPPAMSCEEIIAKFDGEIDALISGSLGAERKPSTIVDAISGKVLR</sequence>
<reference key="1">
    <citation type="submission" date="2007-08" db="EMBL/GenBank/DDBJ databases">
        <title>Complete sequence of Shewanella sediminis HAW-EB3.</title>
        <authorList>
            <consortium name="US DOE Joint Genome Institute"/>
            <person name="Copeland A."/>
            <person name="Lucas S."/>
            <person name="Lapidus A."/>
            <person name="Barry K."/>
            <person name="Glavina del Rio T."/>
            <person name="Dalin E."/>
            <person name="Tice H."/>
            <person name="Pitluck S."/>
            <person name="Chertkov O."/>
            <person name="Brettin T."/>
            <person name="Bruce D."/>
            <person name="Detter J.C."/>
            <person name="Han C."/>
            <person name="Schmutz J."/>
            <person name="Larimer F."/>
            <person name="Land M."/>
            <person name="Hauser L."/>
            <person name="Kyrpides N."/>
            <person name="Kim E."/>
            <person name="Zhao J.-S."/>
            <person name="Richardson P."/>
        </authorList>
    </citation>
    <scope>NUCLEOTIDE SEQUENCE [LARGE SCALE GENOMIC DNA]</scope>
    <source>
        <strain>HAW-EB3</strain>
    </source>
</reference>